<organism>
    <name type="scientific">Drosophila melanogaster</name>
    <name type="common">Fruit fly</name>
    <dbReference type="NCBI Taxonomy" id="7227"/>
    <lineage>
        <taxon>Eukaryota</taxon>
        <taxon>Metazoa</taxon>
        <taxon>Ecdysozoa</taxon>
        <taxon>Arthropoda</taxon>
        <taxon>Hexapoda</taxon>
        <taxon>Insecta</taxon>
        <taxon>Pterygota</taxon>
        <taxon>Neoptera</taxon>
        <taxon>Endopterygota</taxon>
        <taxon>Diptera</taxon>
        <taxon>Brachycera</taxon>
        <taxon>Muscomorpha</taxon>
        <taxon>Ephydroidea</taxon>
        <taxon>Drosophilidae</taxon>
        <taxon>Drosophila</taxon>
        <taxon>Sophophora</taxon>
    </lineage>
</organism>
<evidence type="ECO:0000256" key="1">
    <source>
        <dbReference type="SAM" id="MobiDB-lite"/>
    </source>
</evidence>
<evidence type="ECO:0000305" key="2"/>
<reference key="1">
    <citation type="journal article" date="2000" name="Science">
        <title>The genome sequence of Drosophila melanogaster.</title>
        <authorList>
            <person name="Adams M.D."/>
            <person name="Celniker S.E."/>
            <person name="Holt R.A."/>
            <person name="Evans C.A."/>
            <person name="Gocayne J.D."/>
            <person name="Amanatides P.G."/>
            <person name="Scherer S.E."/>
            <person name="Li P.W."/>
            <person name="Hoskins R.A."/>
            <person name="Galle R.F."/>
            <person name="George R.A."/>
            <person name="Lewis S.E."/>
            <person name="Richards S."/>
            <person name="Ashburner M."/>
            <person name="Henderson S.N."/>
            <person name="Sutton G.G."/>
            <person name="Wortman J.R."/>
            <person name="Yandell M.D."/>
            <person name="Zhang Q."/>
            <person name="Chen L.X."/>
            <person name="Brandon R.C."/>
            <person name="Rogers Y.-H.C."/>
            <person name="Blazej R.G."/>
            <person name="Champe M."/>
            <person name="Pfeiffer B.D."/>
            <person name="Wan K.H."/>
            <person name="Doyle C."/>
            <person name="Baxter E.G."/>
            <person name="Helt G."/>
            <person name="Nelson C.R."/>
            <person name="Miklos G.L.G."/>
            <person name="Abril J.F."/>
            <person name="Agbayani A."/>
            <person name="An H.-J."/>
            <person name="Andrews-Pfannkoch C."/>
            <person name="Baldwin D."/>
            <person name="Ballew R.M."/>
            <person name="Basu A."/>
            <person name="Baxendale J."/>
            <person name="Bayraktaroglu L."/>
            <person name="Beasley E.M."/>
            <person name="Beeson K.Y."/>
            <person name="Benos P.V."/>
            <person name="Berman B.P."/>
            <person name="Bhandari D."/>
            <person name="Bolshakov S."/>
            <person name="Borkova D."/>
            <person name="Botchan M.R."/>
            <person name="Bouck J."/>
            <person name="Brokstein P."/>
            <person name="Brottier P."/>
            <person name="Burtis K.C."/>
            <person name="Busam D.A."/>
            <person name="Butler H."/>
            <person name="Cadieu E."/>
            <person name="Center A."/>
            <person name="Chandra I."/>
            <person name="Cherry J.M."/>
            <person name="Cawley S."/>
            <person name="Dahlke C."/>
            <person name="Davenport L.B."/>
            <person name="Davies P."/>
            <person name="de Pablos B."/>
            <person name="Delcher A."/>
            <person name="Deng Z."/>
            <person name="Mays A.D."/>
            <person name="Dew I."/>
            <person name="Dietz S.M."/>
            <person name="Dodson K."/>
            <person name="Doup L.E."/>
            <person name="Downes M."/>
            <person name="Dugan-Rocha S."/>
            <person name="Dunkov B.C."/>
            <person name="Dunn P."/>
            <person name="Durbin K.J."/>
            <person name="Evangelista C.C."/>
            <person name="Ferraz C."/>
            <person name="Ferriera S."/>
            <person name="Fleischmann W."/>
            <person name="Fosler C."/>
            <person name="Gabrielian A.E."/>
            <person name="Garg N.S."/>
            <person name="Gelbart W.M."/>
            <person name="Glasser K."/>
            <person name="Glodek A."/>
            <person name="Gong F."/>
            <person name="Gorrell J.H."/>
            <person name="Gu Z."/>
            <person name="Guan P."/>
            <person name="Harris M."/>
            <person name="Harris N.L."/>
            <person name="Harvey D.A."/>
            <person name="Heiman T.J."/>
            <person name="Hernandez J.R."/>
            <person name="Houck J."/>
            <person name="Hostin D."/>
            <person name="Houston K.A."/>
            <person name="Howland T.J."/>
            <person name="Wei M.-H."/>
            <person name="Ibegwam C."/>
            <person name="Jalali M."/>
            <person name="Kalush F."/>
            <person name="Karpen G.H."/>
            <person name="Ke Z."/>
            <person name="Kennison J.A."/>
            <person name="Ketchum K.A."/>
            <person name="Kimmel B.E."/>
            <person name="Kodira C.D."/>
            <person name="Kraft C.L."/>
            <person name="Kravitz S."/>
            <person name="Kulp D."/>
            <person name="Lai Z."/>
            <person name="Lasko P."/>
            <person name="Lei Y."/>
            <person name="Levitsky A.A."/>
            <person name="Li J.H."/>
            <person name="Li Z."/>
            <person name="Liang Y."/>
            <person name="Lin X."/>
            <person name="Liu X."/>
            <person name="Mattei B."/>
            <person name="McIntosh T.C."/>
            <person name="McLeod M.P."/>
            <person name="McPherson D."/>
            <person name="Merkulov G."/>
            <person name="Milshina N.V."/>
            <person name="Mobarry C."/>
            <person name="Morris J."/>
            <person name="Moshrefi A."/>
            <person name="Mount S.M."/>
            <person name="Moy M."/>
            <person name="Murphy B."/>
            <person name="Murphy L."/>
            <person name="Muzny D.M."/>
            <person name="Nelson D.L."/>
            <person name="Nelson D.R."/>
            <person name="Nelson K.A."/>
            <person name="Nixon K."/>
            <person name="Nusskern D.R."/>
            <person name="Pacleb J.M."/>
            <person name="Palazzolo M."/>
            <person name="Pittman G.S."/>
            <person name="Pan S."/>
            <person name="Pollard J."/>
            <person name="Puri V."/>
            <person name="Reese M.G."/>
            <person name="Reinert K."/>
            <person name="Remington K."/>
            <person name="Saunders R.D.C."/>
            <person name="Scheeler F."/>
            <person name="Shen H."/>
            <person name="Shue B.C."/>
            <person name="Siden-Kiamos I."/>
            <person name="Simpson M."/>
            <person name="Skupski M.P."/>
            <person name="Smith T.J."/>
            <person name="Spier E."/>
            <person name="Spradling A.C."/>
            <person name="Stapleton M."/>
            <person name="Strong R."/>
            <person name="Sun E."/>
            <person name="Svirskas R."/>
            <person name="Tector C."/>
            <person name="Turner R."/>
            <person name="Venter E."/>
            <person name="Wang A.H."/>
            <person name="Wang X."/>
            <person name="Wang Z.-Y."/>
            <person name="Wassarman D.A."/>
            <person name="Weinstock G.M."/>
            <person name="Weissenbach J."/>
            <person name="Williams S.M."/>
            <person name="Woodage T."/>
            <person name="Worley K.C."/>
            <person name="Wu D."/>
            <person name="Yang S."/>
            <person name="Yao Q.A."/>
            <person name="Ye J."/>
            <person name="Yeh R.-F."/>
            <person name="Zaveri J.S."/>
            <person name="Zhan M."/>
            <person name="Zhang G."/>
            <person name="Zhao Q."/>
            <person name="Zheng L."/>
            <person name="Zheng X.H."/>
            <person name="Zhong F.N."/>
            <person name="Zhong W."/>
            <person name="Zhou X."/>
            <person name="Zhu S.C."/>
            <person name="Zhu X."/>
            <person name="Smith H.O."/>
            <person name="Gibbs R.A."/>
            <person name="Myers E.W."/>
            <person name="Rubin G.M."/>
            <person name="Venter J.C."/>
        </authorList>
    </citation>
    <scope>NUCLEOTIDE SEQUENCE [LARGE SCALE GENOMIC DNA]</scope>
    <source>
        <strain>Berkeley</strain>
    </source>
</reference>
<reference key="2">
    <citation type="journal article" date="2002" name="Genome Biol.">
        <title>Annotation of the Drosophila melanogaster euchromatic genome: a systematic review.</title>
        <authorList>
            <person name="Misra S."/>
            <person name="Crosby M.A."/>
            <person name="Mungall C.J."/>
            <person name="Matthews B.B."/>
            <person name="Campbell K.S."/>
            <person name="Hradecky P."/>
            <person name="Huang Y."/>
            <person name="Kaminker J.S."/>
            <person name="Millburn G.H."/>
            <person name="Prochnik S.E."/>
            <person name="Smith C.D."/>
            <person name="Tupy J.L."/>
            <person name="Whitfield E.J."/>
            <person name="Bayraktaroglu L."/>
            <person name="Berman B.P."/>
            <person name="Bettencourt B.R."/>
            <person name="Celniker S.E."/>
            <person name="de Grey A.D.N.J."/>
            <person name="Drysdale R.A."/>
            <person name="Harris N.L."/>
            <person name="Richter J."/>
            <person name="Russo S."/>
            <person name="Schroeder A.J."/>
            <person name="Shu S.Q."/>
            <person name="Stapleton M."/>
            <person name="Yamada C."/>
            <person name="Ashburner M."/>
            <person name="Gelbart W.M."/>
            <person name="Rubin G.M."/>
            <person name="Lewis S.E."/>
        </authorList>
    </citation>
    <scope>GENOME REANNOTATION</scope>
    <source>
        <strain>Berkeley</strain>
    </source>
</reference>
<reference key="3">
    <citation type="submission" date="2005-05" db="EMBL/GenBank/DDBJ databases">
        <authorList>
            <person name="Stapleton M."/>
            <person name="Carlson J.W."/>
            <person name="Chavez C."/>
            <person name="Frise E."/>
            <person name="George R.A."/>
            <person name="Pacleb J.M."/>
            <person name="Park S."/>
            <person name="Wan K.H."/>
            <person name="Yu C."/>
            <person name="Celniker S.E."/>
        </authorList>
    </citation>
    <scope>NUCLEOTIDE SEQUENCE [LARGE SCALE MRNA]</scope>
    <source>
        <strain>Berkeley</strain>
    </source>
</reference>
<sequence length="364" mass="40510">MEPVPEEARGVGDDEGELDCLTHMIGALLLQKEPENPENGDSKETIWSGELEWEDAQILDQPKTLHTVQCKICSMVKEGQPEINTENWPNKLKTQLIPKKVLGKIGEQFLKDARMVVFRSSQGEVLNLLITAMSSGFAGCIHFPSNPNCNIKALILIYSRDHQALVGFIPNNEDSFSERLQEILQGAKRKPGVKTPKQPQPEEPPPVEEDAIINELLWTGSLNWSTQASLEEPSISHKLECSVYIAIKNGDPGISAEDWPTDMPMVLMPSIYLGQFAGAFIKDSKLIILRSTPGEEHDSLASSMSAGSCGCARFSSEVVCKVIMLLYSSPRNAFLGFIPRDQANFVKRLREVLDEHRQKARNKE</sequence>
<feature type="chain" id="PRO_0000304968" description="Protein PTOV1 homolog">
    <location>
        <begin position="1"/>
        <end position="364"/>
    </location>
</feature>
<feature type="region of interest" description="Disordered" evidence="1">
    <location>
        <begin position="187"/>
        <end position="207"/>
    </location>
</feature>
<gene>
    <name type="ORF">CG13609</name>
</gene>
<proteinExistence type="evidence at transcript level"/>
<dbReference type="EMBL" id="AE014297">
    <property type="protein sequence ID" value="AAF56262.1"/>
    <property type="molecule type" value="Genomic_DNA"/>
</dbReference>
<dbReference type="EMBL" id="BT023259">
    <property type="protein sequence ID" value="AAY55675.1"/>
    <property type="molecule type" value="mRNA"/>
</dbReference>
<dbReference type="RefSeq" id="NP_651233.1">
    <property type="nucleotide sequence ID" value="NM_142976.5"/>
</dbReference>
<dbReference type="SMR" id="Q9VCB1"/>
<dbReference type="BioGRID" id="67814">
    <property type="interactions" value="3"/>
</dbReference>
<dbReference type="FunCoup" id="Q9VCB1">
    <property type="interactions" value="251"/>
</dbReference>
<dbReference type="IntAct" id="Q9VCB1">
    <property type="interactions" value="3"/>
</dbReference>
<dbReference type="STRING" id="7227.FBpp0083945"/>
<dbReference type="PaxDb" id="7227-FBpp0083945"/>
<dbReference type="DNASU" id="42883"/>
<dbReference type="EnsemblMetazoa" id="FBtr0084560">
    <property type="protein sequence ID" value="FBpp0083945"/>
    <property type="gene ID" value="FBgn0039170"/>
</dbReference>
<dbReference type="GeneID" id="42883"/>
<dbReference type="KEGG" id="dme:Dmel_CG13609"/>
<dbReference type="UCSC" id="CG13609-RA">
    <property type="organism name" value="d. melanogaster"/>
</dbReference>
<dbReference type="AGR" id="FB:FBgn0039170"/>
<dbReference type="FlyBase" id="FBgn0039170">
    <property type="gene designation" value="CG13609"/>
</dbReference>
<dbReference type="VEuPathDB" id="VectorBase:FBgn0039170"/>
<dbReference type="eggNOG" id="ENOG502QRN5">
    <property type="taxonomic scope" value="Eukaryota"/>
</dbReference>
<dbReference type="GeneTree" id="ENSGT00940000168585"/>
<dbReference type="HOGENOM" id="CLU_045342_0_0_1"/>
<dbReference type="InParanoid" id="Q9VCB1"/>
<dbReference type="OMA" id="NELLWTG"/>
<dbReference type="OrthoDB" id="7690434at2759"/>
<dbReference type="PhylomeDB" id="Q9VCB1"/>
<dbReference type="BioGRID-ORCS" id="42883">
    <property type="hits" value="0 hits in 3 CRISPR screens"/>
</dbReference>
<dbReference type="ChiTaRS" id="CG13609">
    <property type="organism name" value="fly"/>
</dbReference>
<dbReference type="GenomeRNAi" id="42883"/>
<dbReference type="PRO" id="PR:Q9VCB1"/>
<dbReference type="Proteomes" id="UP000000803">
    <property type="component" value="Chromosome 3R"/>
</dbReference>
<dbReference type="Bgee" id="FBgn0039170">
    <property type="expression patterns" value="Expressed in cleaving embryo and 15 other cell types or tissues"/>
</dbReference>
<dbReference type="GO" id="GO:0016592">
    <property type="term" value="C:mediator complex"/>
    <property type="evidence" value="ECO:0000318"/>
    <property type="project" value="GO_Central"/>
</dbReference>
<dbReference type="GO" id="GO:0005667">
    <property type="term" value="C:transcription regulator complex"/>
    <property type="evidence" value="ECO:0000318"/>
    <property type="project" value="GO_Central"/>
</dbReference>
<dbReference type="GO" id="GO:0045944">
    <property type="term" value="P:positive regulation of transcription by RNA polymerase II"/>
    <property type="evidence" value="ECO:0000318"/>
    <property type="project" value="GO_Central"/>
</dbReference>
<dbReference type="FunFam" id="2.40.290.30:FF:000002">
    <property type="entry name" value="Mediator of RNA polymerase II transcription subunit"/>
    <property type="match status" value="1"/>
</dbReference>
<dbReference type="Gene3D" id="2.40.290.30">
    <property type="entry name" value="Mediator complex subunit 25, ACID domain"/>
    <property type="match status" value="2"/>
</dbReference>
<dbReference type="InterPro" id="IPR021394">
    <property type="entry name" value="Med25_PTOV"/>
</dbReference>
<dbReference type="InterPro" id="IPR038196">
    <property type="entry name" value="Med25_PTOV_sf"/>
</dbReference>
<dbReference type="PANTHER" id="PTHR12433">
    <property type="entry name" value="MEDIATOR OF RNA POLYMERASE II TRANSCRIPTION SUBUNIT 25"/>
    <property type="match status" value="1"/>
</dbReference>
<dbReference type="PANTHER" id="PTHR12433:SF11">
    <property type="entry name" value="MEDIATOR OF RNA POLYMERASE II TRANSCRIPTION SUBUNIT 25"/>
    <property type="match status" value="1"/>
</dbReference>
<dbReference type="Pfam" id="PF11232">
    <property type="entry name" value="Med25"/>
    <property type="match status" value="2"/>
</dbReference>
<accession>Q9VCB1</accession>
<keyword id="KW-1185">Reference proteome</keyword>
<protein>
    <recommendedName>
        <fullName>Protein PTOV1 homolog</fullName>
    </recommendedName>
</protein>
<name>PTOV1_DROME</name>
<comment type="similarity">
    <text evidence="2">Belongs to the Mediator complex subunit 25 family. PTOV1 subfamily.</text>
</comment>
<comment type="caution">
    <text evidence="2">Despite sequence similarity to MED25, to date this protein has not been identified as a component of the Mediator complex.</text>
</comment>